<feature type="chain" id="PRO_0000286454" description="3-deoxy-D-manno-octulosonic acid transferase">
    <location>
        <begin position="1"/>
        <end position="418"/>
    </location>
</feature>
<feature type="transmembrane region" description="Helical; Signal-anchor" evidence="2">
    <location>
        <begin position="7"/>
        <end position="27"/>
    </location>
</feature>
<feature type="active site" description="Proton acceptor" evidence="1">
    <location>
        <position position="60"/>
    </location>
</feature>
<feature type="binding site" evidence="1">
    <location>
        <begin position="264"/>
        <end position="265"/>
    </location>
    <ligand>
        <name>CMP</name>
        <dbReference type="ChEBI" id="CHEBI:60377"/>
    </ligand>
</feature>
<feature type="binding site" evidence="1">
    <location>
        <begin position="305"/>
        <end position="307"/>
    </location>
    <ligand>
        <name>CMP</name>
        <dbReference type="ChEBI" id="CHEBI:60377"/>
    </ligand>
</feature>
<feature type="binding site" evidence="1">
    <location>
        <begin position="330"/>
        <end position="333"/>
    </location>
    <ligand>
        <name>CMP</name>
        <dbReference type="ChEBI" id="CHEBI:60377"/>
    </ligand>
</feature>
<feature type="site" description="Transition state stabilizer" evidence="1">
    <location>
        <position position="130"/>
    </location>
</feature>
<feature type="site" description="Transition state stabilizer" evidence="1">
    <location>
        <position position="205"/>
    </location>
</feature>
<accession>Q1RGU8</accession>
<dbReference type="EC" id="2.4.99.12"/>
<dbReference type="EMBL" id="CP000087">
    <property type="protein sequence ID" value="ABE05416.1"/>
    <property type="molecule type" value="Genomic_DNA"/>
</dbReference>
<dbReference type="RefSeq" id="WP_011477985.1">
    <property type="nucleotide sequence ID" value="NC_007940.1"/>
</dbReference>
<dbReference type="SMR" id="Q1RGU8"/>
<dbReference type="CAZy" id="GT30">
    <property type="family name" value="Glycosyltransferase Family 30"/>
</dbReference>
<dbReference type="KEGG" id="rbe:RBE_1335"/>
<dbReference type="eggNOG" id="COG1519">
    <property type="taxonomic scope" value="Bacteria"/>
</dbReference>
<dbReference type="HOGENOM" id="CLU_036146_2_0_5"/>
<dbReference type="OrthoDB" id="9789797at2"/>
<dbReference type="UniPathway" id="UPA00958"/>
<dbReference type="Proteomes" id="UP000001951">
    <property type="component" value="Chromosome"/>
</dbReference>
<dbReference type="GO" id="GO:0005886">
    <property type="term" value="C:plasma membrane"/>
    <property type="evidence" value="ECO:0007669"/>
    <property type="project" value="UniProtKB-SubCell"/>
</dbReference>
<dbReference type="GO" id="GO:0043842">
    <property type="term" value="F:Kdo transferase activity"/>
    <property type="evidence" value="ECO:0007669"/>
    <property type="project" value="UniProtKB-EC"/>
</dbReference>
<dbReference type="GO" id="GO:0009245">
    <property type="term" value="P:lipid A biosynthetic process"/>
    <property type="evidence" value="ECO:0007669"/>
    <property type="project" value="TreeGrafter"/>
</dbReference>
<dbReference type="GO" id="GO:0009244">
    <property type="term" value="P:lipopolysaccharide core region biosynthetic process"/>
    <property type="evidence" value="ECO:0007669"/>
    <property type="project" value="UniProtKB-UniPathway"/>
</dbReference>
<dbReference type="Gene3D" id="3.40.50.11720">
    <property type="entry name" value="3-Deoxy-D-manno-octulosonic-acid transferase, N-terminal domain"/>
    <property type="match status" value="1"/>
</dbReference>
<dbReference type="Gene3D" id="3.40.50.2000">
    <property type="entry name" value="Glycogen Phosphorylase B"/>
    <property type="match status" value="1"/>
</dbReference>
<dbReference type="InterPro" id="IPR007507">
    <property type="entry name" value="Glycos_transf_N"/>
</dbReference>
<dbReference type="InterPro" id="IPR038107">
    <property type="entry name" value="Glycos_transf_N_sf"/>
</dbReference>
<dbReference type="InterPro" id="IPR039901">
    <property type="entry name" value="Kdotransferase"/>
</dbReference>
<dbReference type="NCBIfam" id="NF004389">
    <property type="entry name" value="PRK05749.1-5"/>
    <property type="match status" value="1"/>
</dbReference>
<dbReference type="PANTHER" id="PTHR42755:SF1">
    <property type="entry name" value="3-DEOXY-D-MANNO-OCTULOSONIC ACID TRANSFERASE, MITOCHONDRIAL-RELATED"/>
    <property type="match status" value="1"/>
</dbReference>
<dbReference type="PANTHER" id="PTHR42755">
    <property type="entry name" value="3-DEOXY-MANNO-OCTULOSONATE CYTIDYLYLTRANSFERASE"/>
    <property type="match status" value="1"/>
</dbReference>
<dbReference type="Pfam" id="PF04413">
    <property type="entry name" value="Glycos_transf_N"/>
    <property type="match status" value="1"/>
</dbReference>
<gene>
    <name type="primary">waaA</name>
    <name type="synonym">kdtA</name>
    <name type="ordered locus">RBE_1335</name>
</gene>
<protein>
    <recommendedName>
        <fullName>3-deoxy-D-manno-octulosonic acid transferase</fullName>
        <shortName>Kdo transferase</shortName>
        <ecNumber>2.4.99.12</ecNumber>
    </recommendedName>
    <alternativeName>
        <fullName>Lipid IV(A) 3-deoxy-D-manno-octulosonic acid transferase</fullName>
    </alternativeName>
</protein>
<sequence length="418" mass="48119">MMRLYYFLSFLLLPIYFVIIFIRLLIGKEDIRRVKERFAIGKHRQDNRFLIWIHAASVGESMIALNLVDNISKHFPEVRFLVTSWTQSSAKILSTKLPKIATHQLLPIDNIIFTKIFLNNWKPDLGIFIESELWPGTINEAAKQCNLLLVNARMSDKSFESWKKRKGFFQLIVKNFSEVIVQSERDLQKFNELGISNTTNLGNIKFANEKLPVNQEELIKLSEHLKNKQVILFASTHPEDEEIILPIIKNLKKQVIDCYIILIPRHPERIKSILDNCIAQDLSATAKSQNDLPVLTDDLYIVDRFGEMGLFFSIASISFIGGSFKQGGHNILEAAHFSNCIIFGPDMSKNTDIAKGVLQSKAAIQIKSGEELLNMLEYLLDPNNSRELKNYQENSLKFVERNQKILDEYLQIITKFFP</sequence>
<evidence type="ECO:0000250" key="1"/>
<evidence type="ECO:0000255" key="2"/>
<evidence type="ECO:0000305" key="3"/>
<organism>
    <name type="scientific">Rickettsia bellii (strain RML369-C)</name>
    <dbReference type="NCBI Taxonomy" id="336407"/>
    <lineage>
        <taxon>Bacteria</taxon>
        <taxon>Pseudomonadati</taxon>
        <taxon>Pseudomonadota</taxon>
        <taxon>Alphaproteobacteria</taxon>
        <taxon>Rickettsiales</taxon>
        <taxon>Rickettsiaceae</taxon>
        <taxon>Rickettsieae</taxon>
        <taxon>Rickettsia</taxon>
        <taxon>belli group</taxon>
    </lineage>
</organism>
<keyword id="KW-0997">Cell inner membrane</keyword>
<keyword id="KW-1003">Cell membrane</keyword>
<keyword id="KW-0448">Lipopolysaccharide biosynthesis</keyword>
<keyword id="KW-0472">Membrane</keyword>
<keyword id="KW-0735">Signal-anchor</keyword>
<keyword id="KW-0808">Transferase</keyword>
<keyword id="KW-0812">Transmembrane</keyword>
<keyword id="KW-1133">Transmembrane helix</keyword>
<reference key="1">
    <citation type="journal article" date="2006" name="PLoS Genet.">
        <title>Genome sequence of Rickettsia bellii illuminates the role of amoebae in gene exchanges between intracellular pathogens.</title>
        <authorList>
            <person name="Ogata H."/>
            <person name="La Scola B."/>
            <person name="Audic S."/>
            <person name="Renesto P."/>
            <person name="Blanc G."/>
            <person name="Robert C."/>
            <person name="Fournier P.-E."/>
            <person name="Claverie J.-M."/>
            <person name="Raoult D."/>
        </authorList>
    </citation>
    <scope>NUCLEOTIDE SEQUENCE [LARGE SCALE GENOMIC DNA]</scope>
    <source>
        <strain>RML369-C</strain>
    </source>
</reference>
<comment type="function">
    <text evidence="1">Involved in lipopolysaccharide (LPS) biosynthesis. Catalyzes the transfer of 3-deoxy-D-manno-octulosonate (Kdo) residue(s) from CMP-Kdo to lipid IV(A), the tetraacyldisaccharide-1,4'-bisphosphate precursor of lipid A.</text>
</comment>
<comment type="catalytic activity">
    <reaction>
        <text>lipid IVA (E. coli) + CMP-3-deoxy-beta-D-manno-octulosonate = alpha-Kdo-(2-&gt;6)-lipid IVA (E. coli) + CMP + H(+)</text>
        <dbReference type="Rhea" id="RHEA:28066"/>
        <dbReference type="ChEBI" id="CHEBI:15378"/>
        <dbReference type="ChEBI" id="CHEBI:58603"/>
        <dbReference type="ChEBI" id="CHEBI:60364"/>
        <dbReference type="ChEBI" id="CHEBI:60377"/>
        <dbReference type="ChEBI" id="CHEBI:85987"/>
        <dbReference type="EC" id="2.4.99.12"/>
    </reaction>
</comment>
<comment type="pathway">
    <text>Bacterial outer membrane biogenesis; LPS core biosynthesis.</text>
</comment>
<comment type="subcellular location">
    <subcellularLocation>
        <location evidence="1">Cell inner membrane</location>
        <topology evidence="1">Single-pass membrane protein</topology>
        <orientation evidence="1">Cytoplasmic side</orientation>
    </subcellularLocation>
</comment>
<comment type="similarity">
    <text evidence="3">Belongs to the glycosyltransferase group 1 family. Glycosyltransferase 30 subfamily.</text>
</comment>
<proteinExistence type="inferred from homology"/>
<name>KDTA_RICBR</name>